<name>UBIE_YERPS</name>
<sequence length="251" mass="28198">MVDQEKETTHFGFRTVAKEQKEGMVAEVFHSVAAKYDLMNDLMSFGVHRIWKRFTVDCSGVRRGQRVLDLAGGTGDLTAKFSRLVGEQGEVILADINESMLRMGREKLRDKGIVGNVSYVQANAEALPFPDNYFDCITISFGLRNVTEKEKALRSMFRVLKPGGRLLVLEFSKPLLEPLSKAYDAYSFHILPKIGELVAQDAESYRYLAESIRMHPDQETLKGMMADAGFENVTYSNLTGGIVALHRGFKF</sequence>
<evidence type="ECO:0000255" key="1">
    <source>
        <dbReference type="HAMAP-Rule" id="MF_01813"/>
    </source>
</evidence>
<gene>
    <name evidence="1" type="primary">ubiE</name>
    <name type="ordered locus">YPTB0255</name>
</gene>
<keyword id="KW-0474">Menaquinone biosynthesis</keyword>
<keyword id="KW-0489">Methyltransferase</keyword>
<keyword id="KW-0949">S-adenosyl-L-methionine</keyword>
<keyword id="KW-0808">Transferase</keyword>
<keyword id="KW-0831">Ubiquinone biosynthesis</keyword>
<dbReference type="EC" id="2.1.1.163" evidence="1"/>
<dbReference type="EC" id="2.1.1.201" evidence="1"/>
<dbReference type="EMBL" id="BX936398">
    <property type="protein sequence ID" value="CAH19495.1"/>
    <property type="molecule type" value="Genomic_DNA"/>
</dbReference>
<dbReference type="RefSeq" id="WP_002224024.1">
    <property type="nucleotide sequence ID" value="NZ_CP009712.1"/>
</dbReference>
<dbReference type="SMR" id="Q66FT0"/>
<dbReference type="GeneID" id="49787763"/>
<dbReference type="KEGG" id="ypo:BZ17_2328"/>
<dbReference type="KEGG" id="yps:YPTB0255"/>
<dbReference type="PATRIC" id="fig|273123.14.peg.2451"/>
<dbReference type="UniPathway" id="UPA00079">
    <property type="reaction ID" value="UER00169"/>
</dbReference>
<dbReference type="UniPathway" id="UPA00232"/>
<dbReference type="Proteomes" id="UP000001011">
    <property type="component" value="Chromosome"/>
</dbReference>
<dbReference type="GO" id="GO:0008425">
    <property type="term" value="F:2-methoxy-6-polyprenyl-1,4-benzoquinol methyltransferase activity"/>
    <property type="evidence" value="ECO:0007669"/>
    <property type="project" value="UniProtKB-UniRule"/>
</dbReference>
<dbReference type="GO" id="GO:0043770">
    <property type="term" value="F:demethylmenaquinone methyltransferase activity"/>
    <property type="evidence" value="ECO:0007669"/>
    <property type="project" value="UniProtKB-UniRule"/>
</dbReference>
<dbReference type="GO" id="GO:0009060">
    <property type="term" value="P:aerobic respiration"/>
    <property type="evidence" value="ECO:0007669"/>
    <property type="project" value="UniProtKB-UniRule"/>
</dbReference>
<dbReference type="GO" id="GO:0009234">
    <property type="term" value="P:menaquinone biosynthetic process"/>
    <property type="evidence" value="ECO:0007669"/>
    <property type="project" value="UniProtKB-UniRule"/>
</dbReference>
<dbReference type="GO" id="GO:0032259">
    <property type="term" value="P:methylation"/>
    <property type="evidence" value="ECO:0007669"/>
    <property type="project" value="UniProtKB-KW"/>
</dbReference>
<dbReference type="CDD" id="cd02440">
    <property type="entry name" value="AdoMet_MTases"/>
    <property type="match status" value="1"/>
</dbReference>
<dbReference type="FunFam" id="3.40.50.150:FF:000014">
    <property type="entry name" value="Ubiquinone/menaquinone biosynthesis C-methyltransferase UbiE"/>
    <property type="match status" value="1"/>
</dbReference>
<dbReference type="Gene3D" id="3.40.50.150">
    <property type="entry name" value="Vaccinia Virus protein VP39"/>
    <property type="match status" value="1"/>
</dbReference>
<dbReference type="HAMAP" id="MF_01813">
    <property type="entry name" value="MenG_UbiE_methyltr"/>
    <property type="match status" value="1"/>
</dbReference>
<dbReference type="InterPro" id="IPR029063">
    <property type="entry name" value="SAM-dependent_MTases_sf"/>
</dbReference>
<dbReference type="InterPro" id="IPR004033">
    <property type="entry name" value="UbiE/COQ5_MeTrFase"/>
</dbReference>
<dbReference type="InterPro" id="IPR023576">
    <property type="entry name" value="UbiE/COQ5_MeTrFase_CS"/>
</dbReference>
<dbReference type="NCBIfam" id="TIGR01934">
    <property type="entry name" value="MenG_MenH_UbiE"/>
    <property type="match status" value="1"/>
</dbReference>
<dbReference type="NCBIfam" id="NF001240">
    <property type="entry name" value="PRK00216.1-1"/>
    <property type="match status" value="1"/>
</dbReference>
<dbReference type="NCBIfam" id="NF001242">
    <property type="entry name" value="PRK00216.1-3"/>
    <property type="match status" value="1"/>
</dbReference>
<dbReference type="NCBIfam" id="NF001244">
    <property type="entry name" value="PRK00216.1-5"/>
    <property type="match status" value="1"/>
</dbReference>
<dbReference type="PANTHER" id="PTHR43591:SF24">
    <property type="entry name" value="2-METHOXY-6-POLYPRENYL-1,4-BENZOQUINOL METHYLASE, MITOCHONDRIAL"/>
    <property type="match status" value="1"/>
</dbReference>
<dbReference type="PANTHER" id="PTHR43591">
    <property type="entry name" value="METHYLTRANSFERASE"/>
    <property type="match status" value="1"/>
</dbReference>
<dbReference type="Pfam" id="PF01209">
    <property type="entry name" value="Ubie_methyltran"/>
    <property type="match status" value="1"/>
</dbReference>
<dbReference type="SUPFAM" id="SSF53335">
    <property type="entry name" value="S-adenosyl-L-methionine-dependent methyltransferases"/>
    <property type="match status" value="1"/>
</dbReference>
<dbReference type="PROSITE" id="PS51608">
    <property type="entry name" value="SAM_MT_UBIE"/>
    <property type="match status" value="1"/>
</dbReference>
<dbReference type="PROSITE" id="PS01183">
    <property type="entry name" value="UBIE_1"/>
    <property type="match status" value="1"/>
</dbReference>
<dbReference type="PROSITE" id="PS01184">
    <property type="entry name" value="UBIE_2"/>
    <property type="match status" value="1"/>
</dbReference>
<organism>
    <name type="scientific">Yersinia pseudotuberculosis serotype I (strain IP32953)</name>
    <dbReference type="NCBI Taxonomy" id="273123"/>
    <lineage>
        <taxon>Bacteria</taxon>
        <taxon>Pseudomonadati</taxon>
        <taxon>Pseudomonadota</taxon>
        <taxon>Gammaproteobacteria</taxon>
        <taxon>Enterobacterales</taxon>
        <taxon>Yersiniaceae</taxon>
        <taxon>Yersinia</taxon>
    </lineage>
</organism>
<reference key="1">
    <citation type="journal article" date="2004" name="Proc. Natl. Acad. Sci. U.S.A.">
        <title>Insights into the evolution of Yersinia pestis through whole-genome comparison with Yersinia pseudotuberculosis.</title>
        <authorList>
            <person name="Chain P.S.G."/>
            <person name="Carniel E."/>
            <person name="Larimer F.W."/>
            <person name="Lamerdin J."/>
            <person name="Stoutland P.O."/>
            <person name="Regala W.M."/>
            <person name="Georgescu A.M."/>
            <person name="Vergez L.M."/>
            <person name="Land M.L."/>
            <person name="Motin V.L."/>
            <person name="Brubaker R.R."/>
            <person name="Fowler J."/>
            <person name="Hinnebusch J."/>
            <person name="Marceau M."/>
            <person name="Medigue C."/>
            <person name="Simonet M."/>
            <person name="Chenal-Francisque V."/>
            <person name="Souza B."/>
            <person name="Dacheux D."/>
            <person name="Elliott J.M."/>
            <person name="Derbise A."/>
            <person name="Hauser L.J."/>
            <person name="Garcia E."/>
        </authorList>
    </citation>
    <scope>NUCLEOTIDE SEQUENCE [LARGE SCALE GENOMIC DNA]</scope>
    <source>
        <strain>IP32953</strain>
    </source>
</reference>
<comment type="function">
    <text evidence="1">Methyltransferase required for the conversion of demethylmenaquinol (DMKH2) to menaquinol (MKH2) and the conversion of 2-polyprenyl-6-methoxy-1,4-benzoquinol (DDMQH2) to 2-polyprenyl-3-methyl-6-methoxy-1,4-benzoquinol (DMQH2).</text>
</comment>
<comment type="catalytic activity">
    <reaction evidence="1">
        <text>a 2-demethylmenaquinol + S-adenosyl-L-methionine = a menaquinol + S-adenosyl-L-homocysteine + H(+)</text>
        <dbReference type="Rhea" id="RHEA:42640"/>
        <dbReference type="Rhea" id="RHEA-COMP:9539"/>
        <dbReference type="Rhea" id="RHEA-COMP:9563"/>
        <dbReference type="ChEBI" id="CHEBI:15378"/>
        <dbReference type="ChEBI" id="CHEBI:18151"/>
        <dbReference type="ChEBI" id="CHEBI:55437"/>
        <dbReference type="ChEBI" id="CHEBI:57856"/>
        <dbReference type="ChEBI" id="CHEBI:59789"/>
        <dbReference type="EC" id="2.1.1.163"/>
    </reaction>
</comment>
<comment type="catalytic activity">
    <reaction evidence="1">
        <text>a 2-methoxy-6-(all-trans-polyprenyl)benzene-1,4-diol + S-adenosyl-L-methionine = a 5-methoxy-2-methyl-3-(all-trans-polyprenyl)benzene-1,4-diol + S-adenosyl-L-homocysteine + H(+)</text>
        <dbReference type="Rhea" id="RHEA:28286"/>
        <dbReference type="Rhea" id="RHEA-COMP:10858"/>
        <dbReference type="Rhea" id="RHEA-COMP:10859"/>
        <dbReference type="ChEBI" id="CHEBI:15378"/>
        <dbReference type="ChEBI" id="CHEBI:57856"/>
        <dbReference type="ChEBI" id="CHEBI:59789"/>
        <dbReference type="ChEBI" id="CHEBI:84166"/>
        <dbReference type="ChEBI" id="CHEBI:84167"/>
        <dbReference type="EC" id="2.1.1.201"/>
    </reaction>
</comment>
<comment type="pathway">
    <text evidence="1">Quinol/quinone metabolism; menaquinone biosynthesis; menaquinol from 1,4-dihydroxy-2-naphthoate: step 2/2.</text>
</comment>
<comment type="pathway">
    <text evidence="1">Cofactor biosynthesis; ubiquinone biosynthesis.</text>
</comment>
<comment type="similarity">
    <text evidence="1">Belongs to the class I-like SAM-binding methyltransferase superfamily. MenG/UbiE family.</text>
</comment>
<feature type="chain" id="PRO_0000193358" description="Ubiquinone/menaquinone biosynthesis C-methyltransferase UbiE">
    <location>
        <begin position="1"/>
        <end position="251"/>
    </location>
</feature>
<feature type="binding site" evidence="1">
    <location>
        <position position="74"/>
    </location>
    <ligand>
        <name>S-adenosyl-L-methionine</name>
        <dbReference type="ChEBI" id="CHEBI:59789"/>
    </ligand>
</feature>
<feature type="binding site" evidence="1">
    <location>
        <position position="95"/>
    </location>
    <ligand>
        <name>S-adenosyl-L-methionine</name>
        <dbReference type="ChEBI" id="CHEBI:59789"/>
    </ligand>
</feature>
<feature type="binding site" evidence="1">
    <location>
        <begin position="123"/>
        <end position="124"/>
    </location>
    <ligand>
        <name>S-adenosyl-L-methionine</name>
        <dbReference type="ChEBI" id="CHEBI:59789"/>
    </ligand>
</feature>
<feature type="binding site" evidence="1">
    <location>
        <position position="140"/>
    </location>
    <ligand>
        <name>S-adenosyl-L-methionine</name>
        <dbReference type="ChEBI" id="CHEBI:59789"/>
    </ligand>
</feature>
<accession>Q66FT0</accession>
<proteinExistence type="inferred from homology"/>
<protein>
    <recommendedName>
        <fullName evidence="1">Ubiquinone/menaquinone biosynthesis C-methyltransferase UbiE</fullName>
        <ecNumber evidence="1">2.1.1.163</ecNumber>
        <ecNumber evidence="1">2.1.1.201</ecNumber>
    </recommendedName>
    <alternativeName>
        <fullName evidence="1">2-methoxy-6-polyprenyl-1,4-benzoquinol methylase</fullName>
    </alternativeName>
    <alternativeName>
        <fullName evidence="1">Demethylmenaquinone methyltransferase</fullName>
    </alternativeName>
</protein>